<evidence type="ECO:0000255" key="1">
    <source>
        <dbReference type="HAMAP-Rule" id="MF_00303"/>
    </source>
</evidence>
<proteinExistence type="inferred from homology"/>
<dbReference type="EC" id="5.2.1.8" evidence="1"/>
<dbReference type="EMBL" id="CP001147">
    <property type="protein sequence ID" value="ACI20416.1"/>
    <property type="molecule type" value="Genomic_DNA"/>
</dbReference>
<dbReference type="RefSeq" id="WP_012545152.1">
    <property type="nucleotide sequence ID" value="NC_011296.1"/>
</dbReference>
<dbReference type="RefSeq" id="YP_002248103.1">
    <property type="nucleotide sequence ID" value="NC_011296.1"/>
</dbReference>
<dbReference type="SMR" id="B5YI37"/>
<dbReference type="FunCoup" id="B5YI37">
    <property type="interactions" value="547"/>
</dbReference>
<dbReference type="STRING" id="289376.THEYE_A0254"/>
<dbReference type="EnsemblBacteria" id="ACI20416">
    <property type="protein sequence ID" value="ACI20416"/>
    <property type="gene ID" value="THEYE_A0254"/>
</dbReference>
<dbReference type="KEGG" id="tye:THEYE_A0254"/>
<dbReference type="PATRIC" id="fig|289376.4.peg.251"/>
<dbReference type="eggNOG" id="COG0544">
    <property type="taxonomic scope" value="Bacteria"/>
</dbReference>
<dbReference type="HOGENOM" id="CLU_033058_2_0_0"/>
<dbReference type="InParanoid" id="B5YI37"/>
<dbReference type="OrthoDB" id="9767721at2"/>
<dbReference type="Proteomes" id="UP000000718">
    <property type="component" value="Chromosome"/>
</dbReference>
<dbReference type="GO" id="GO:0005737">
    <property type="term" value="C:cytoplasm"/>
    <property type="evidence" value="ECO:0007669"/>
    <property type="project" value="UniProtKB-SubCell"/>
</dbReference>
<dbReference type="GO" id="GO:0003755">
    <property type="term" value="F:peptidyl-prolyl cis-trans isomerase activity"/>
    <property type="evidence" value="ECO:0000318"/>
    <property type="project" value="GO_Central"/>
</dbReference>
<dbReference type="GO" id="GO:0044183">
    <property type="term" value="F:protein folding chaperone"/>
    <property type="evidence" value="ECO:0000318"/>
    <property type="project" value="GO_Central"/>
</dbReference>
<dbReference type="GO" id="GO:0043022">
    <property type="term" value="F:ribosome binding"/>
    <property type="evidence" value="ECO:0000318"/>
    <property type="project" value="GO_Central"/>
</dbReference>
<dbReference type="GO" id="GO:0051083">
    <property type="term" value="P:'de novo' cotranslational protein folding"/>
    <property type="evidence" value="ECO:0000318"/>
    <property type="project" value="GO_Central"/>
</dbReference>
<dbReference type="GO" id="GO:0051301">
    <property type="term" value="P:cell division"/>
    <property type="evidence" value="ECO:0007669"/>
    <property type="project" value="UniProtKB-KW"/>
</dbReference>
<dbReference type="GO" id="GO:0061077">
    <property type="term" value="P:chaperone-mediated protein folding"/>
    <property type="evidence" value="ECO:0000318"/>
    <property type="project" value="GO_Central"/>
</dbReference>
<dbReference type="GO" id="GO:0015031">
    <property type="term" value="P:protein transport"/>
    <property type="evidence" value="ECO:0007669"/>
    <property type="project" value="UniProtKB-UniRule"/>
</dbReference>
<dbReference type="GO" id="GO:0043335">
    <property type="term" value="P:protein unfolding"/>
    <property type="evidence" value="ECO:0000318"/>
    <property type="project" value="GO_Central"/>
</dbReference>
<dbReference type="Gene3D" id="3.10.50.40">
    <property type="match status" value="1"/>
</dbReference>
<dbReference type="Gene3D" id="3.30.70.1050">
    <property type="entry name" value="Trigger factor ribosome-binding domain"/>
    <property type="match status" value="1"/>
</dbReference>
<dbReference type="Gene3D" id="1.10.3120.10">
    <property type="entry name" value="Trigger factor, C-terminal domain"/>
    <property type="match status" value="1"/>
</dbReference>
<dbReference type="HAMAP" id="MF_00303">
    <property type="entry name" value="Trigger_factor_Tig"/>
    <property type="match status" value="1"/>
</dbReference>
<dbReference type="InterPro" id="IPR046357">
    <property type="entry name" value="PPIase_dom_sf"/>
</dbReference>
<dbReference type="InterPro" id="IPR005215">
    <property type="entry name" value="Trig_fac"/>
</dbReference>
<dbReference type="InterPro" id="IPR008880">
    <property type="entry name" value="Trigger_fac_C"/>
</dbReference>
<dbReference type="InterPro" id="IPR037041">
    <property type="entry name" value="Trigger_fac_C_sf"/>
</dbReference>
<dbReference type="InterPro" id="IPR008881">
    <property type="entry name" value="Trigger_fac_ribosome-bd_bac"/>
</dbReference>
<dbReference type="InterPro" id="IPR036611">
    <property type="entry name" value="Trigger_fac_ribosome-bd_sf"/>
</dbReference>
<dbReference type="InterPro" id="IPR027304">
    <property type="entry name" value="Trigger_fact/SurA_dom_sf"/>
</dbReference>
<dbReference type="NCBIfam" id="TIGR00115">
    <property type="entry name" value="tig"/>
    <property type="match status" value="1"/>
</dbReference>
<dbReference type="PANTHER" id="PTHR30560">
    <property type="entry name" value="TRIGGER FACTOR CHAPERONE AND PEPTIDYL-PROLYL CIS/TRANS ISOMERASE"/>
    <property type="match status" value="1"/>
</dbReference>
<dbReference type="PANTHER" id="PTHR30560:SF3">
    <property type="entry name" value="TRIGGER FACTOR-LIKE PROTEIN TIG, CHLOROPLASTIC"/>
    <property type="match status" value="1"/>
</dbReference>
<dbReference type="Pfam" id="PF05698">
    <property type="entry name" value="Trigger_C"/>
    <property type="match status" value="1"/>
</dbReference>
<dbReference type="Pfam" id="PF05697">
    <property type="entry name" value="Trigger_N"/>
    <property type="match status" value="1"/>
</dbReference>
<dbReference type="PIRSF" id="PIRSF003095">
    <property type="entry name" value="Trigger_factor"/>
    <property type="match status" value="1"/>
</dbReference>
<dbReference type="SUPFAM" id="SSF54534">
    <property type="entry name" value="FKBP-like"/>
    <property type="match status" value="1"/>
</dbReference>
<dbReference type="SUPFAM" id="SSF109998">
    <property type="entry name" value="Triger factor/SurA peptide-binding domain-like"/>
    <property type="match status" value="1"/>
</dbReference>
<dbReference type="SUPFAM" id="SSF102735">
    <property type="entry name" value="Trigger factor ribosome-binding domain"/>
    <property type="match status" value="1"/>
</dbReference>
<sequence length="411" mass="47274">MLKGIEEISATKKRLKIEIPADIVEGEIQKALKEIQKKAKIPGFRPGKAPISIIEKKFGKEAEADVLEKLVSESYQKAVKETKIKPLLPPMAEDAIDIKRNEPLSFELVVEVRPDIENLNYDNIEVEEISTEVKEEEIEEVLQRLSKERGTYEPTEEPAMSEDLVVIDYTTDIGKEAKDYIYKLGAGPFPEDFSKAIEGKKKDETFSVTIDFPEDSIADFAGKKVNFEITIKEVKRRQNIPLEELHKELGFEDSDSLKKYIRQSLENAKKEQALEKQKFDILKKLLETYDFELPEGLVEMEMKRITEEYESLGLDITQHMDKISERAKRNVKAYILIDLIGEKEGVSVSEEELKQEIMNIARRYSITPQGVVQYYMSRDGSLEALQNSVFERKVFDILLQKSNRIKKEEAV</sequence>
<feature type="chain" id="PRO_1000115595" description="Trigger factor">
    <location>
        <begin position="1"/>
        <end position="411"/>
    </location>
</feature>
<feature type="domain" description="PPIase FKBP-type" evidence="1">
    <location>
        <begin position="162"/>
        <end position="240"/>
    </location>
</feature>
<protein>
    <recommendedName>
        <fullName evidence="1">Trigger factor</fullName>
        <shortName evidence="1">TF</shortName>
        <ecNumber evidence="1">5.2.1.8</ecNumber>
    </recommendedName>
    <alternativeName>
        <fullName evidence="1">PPIase</fullName>
    </alternativeName>
</protein>
<reference key="1">
    <citation type="submission" date="2008-08" db="EMBL/GenBank/DDBJ databases">
        <title>The complete genome sequence of Thermodesulfovibrio yellowstonii strain ATCC 51303 / DSM 11347 / YP87.</title>
        <authorList>
            <person name="Dodson R.J."/>
            <person name="Durkin A.S."/>
            <person name="Wu M."/>
            <person name="Eisen J."/>
            <person name="Sutton G."/>
        </authorList>
    </citation>
    <scope>NUCLEOTIDE SEQUENCE [LARGE SCALE GENOMIC DNA]</scope>
    <source>
        <strain>ATCC 51303 / DSM 11347 / YP87</strain>
    </source>
</reference>
<comment type="function">
    <text evidence="1">Involved in protein export. Acts as a chaperone by maintaining the newly synthesized protein in an open conformation. Functions as a peptidyl-prolyl cis-trans isomerase.</text>
</comment>
<comment type="catalytic activity">
    <reaction evidence="1">
        <text>[protein]-peptidylproline (omega=180) = [protein]-peptidylproline (omega=0)</text>
        <dbReference type="Rhea" id="RHEA:16237"/>
        <dbReference type="Rhea" id="RHEA-COMP:10747"/>
        <dbReference type="Rhea" id="RHEA-COMP:10748"/>
        <dbReference type="ChEBI" id="CHEBI:83833"/>
        <dbReference type="ChEBI" id="CHEBI:83834"/>
        <dbReference type="EC" id="5.2.1.8"/>
    </reaction>
</comment>
<comment type="subcellular location">
    <subcellularLocation>
        <location>Cytoplasm</location>
    </subcellularLocation>
    <text evidence="1">About half TF is bound to the ribosome near the polypeptide exit tunnel while the other half is free in the cytoplasm.</text>
</comment>
<comment type="domain">
    <text evidence="1">Consists of 3 domains; the N-terminus binds the ribosome, the middle domain has PPIase activity, while the C-terminus has intrinsic chaperone activity on its own.</text>
</comment>
<comment type="similarity">
    <text evidence="1">Belongs to the FKBP-type PPIase family. Tig subfamily.</text>
</comment>
<organism>
    <name type="scientific">Thermodesulfovibrio yellowstonii (strain ATCC 51303 / DSM 11347 / YP87)</name>
    <dbReference type="NCBI Taxonomy" id="289376"/>
    <lineage>
        <taxon>Bacteria</taxon>
        <taxon>Pseudomonadati</taxon>
        <taxon>Nitrospirota</taxon>
        <taxon>Thermodesulfovibrionia</taxon>
        <taxon>Thermodesulfovibrionales</taxon>
        <taxon>Thermodesulfovibrionaceae</taxon>
        <taxon>Thermodesulfovibrio</taxon>
    </lineage>
</organism>
<accession>B5YI37</accession>
<name>TIG_THEYD</name>
<gene>
    <name evidence="1" type="primary">tig</name>
    <name type="ordered locus">THEYE_A0254</name>
</gene>
<keyword id="KW-0131">Cell cycle</keyword>
<keyword id="KW-0132">Cell division</keyword>
<keyword id="KW-0143">Chaperone</keyword>
<keyword id="KW-0963">Cytoplasm</keyword>
<keyword id="KW-0413">Isomerase</keyword>
<keyword id="KW-1185">Reference proteome</keyword>
<keyword id="KW-0697">Rotamase</keyword>